<name>PH4H_RAT</name>
<keyword id="KW-0002">3D-structure</keyword>
<keyword id="KW-0007">Acetylation</keyword>
<keyword id="KW-0021">Allosteric enzyme</keyword>
<keyword id="KW-0903">Direct protein sequencing</keyword>
<keyword id="KW-0408">Iron</keyword>
<keyword id="KW-0479">Metal-binding</keyword>
<keyword id="KW-0503">Monooxygenase</keyword>
<keyword id="KW-0560">Oxidoreductase</keyword>
<keyword id="KW-0585">Phenylalanine catabolism</keyword>
<keyword id="KW-0597">Phosphoprotein</keyword>
<keyword id="KW-1185">Reference proteome</keyword>
<comment type="function">
    <text evidence="1">Catalyzes the hydroxylation of L-phenylalanine to L-tyrosine.</text>
</comment>
<comment type="catalytic activity">
    <reaction evidence="1">
        <text>(6R)-L-erythro-5,6,7,8-tetrahydrobiopterin + L-phenylalanine + O2 = (4aS,6R)-4a-hydroxy-L-erythro-5,6,7,8-tetrahydrobiopterin + L-tyrosine</text>
        <dbReference type="Rhea" id="RHEA:20273"/>
        <dbReference type="ChEBI" id="CHEBI:15379"/>
        <dbReference type="ChEBI" id="CHEBI:15642"/>
        <dbReference type="ChEBI" id="CHEBI:58095"/>
        <dbReference type="ChEBI" id="CHEBI:58315"/>
        <dbReference type="ChEBI" id="CHEBI:59560"/>
        <dbReference type="EC" id="1.14.16.1"/>
    </reaction>
</comment>
<comment type="cofactor">
    <cofactor evidence="4">
        <name>Fe(2+)</name>
        <dbReference type="ChEBI" id="CHEBI:29033"/>
    </cofactor>
</comment>
<comment type="activity regulation">
    <text evidence="1">N-terminal region of PAH is thought to contain allosteric binding sites for phenylalanine and to constitute an 'inhibitory' domain that regulates the activity of a catalytic domain in the C-terminal portion of the molecule.</text>
</comment>
<comment type="pathway">
    <text>Amino-acid degradation; L-phenylalanine degradation; acetoacetate and fumarate from L-phenylalanine: step 1/6.</text>
</comment>
<comment type="subunit">
    <text evidence="6">Homodimer and homotetramer.</text>
</comment>
<comment type="PTM">
    <text evidence="1">Phosphorylation at Ser-16 increases basal activity and facilitates activation by the substrate phenylalanine.</text>
</comment>
<comment type="similarity">
    <text evidence="7">Belongs to the biopterin-dependent aromatic amino acid hydroxylase family.</text>
</comment>
<sequence length="453" mass="51822">MAAVVLENGVLSRKLSDFGQETSYIEDNSNQNGAISLIFSLKEEVGALAKVLRLFEENDINLTHIESRPSRLNKDEYEFFTYLDKRTKPVLGSIIKSLRNDIGATVHELSRDKEKNTVPWFPRTIQELDRFANQILSYGAELDADHPGFKDPVYRARRKQFADIAYNYRHGQPIPRVEYTEEEKQTWGTVFRTLKALYKTHACYEHNHIFPLLEKYCGFREDNIPQLEDVSQFLQTCTGFRLRPVAGLLSSRDFLGGLAFRVFHCTQYIRHGSKPMYTPEPDICHELLGHVPLFSDRSFAQFSQEIGLASLGAPDEYIEKLATIYWFTVEFGLCKEGDSIKAYGAGLLSSFGELQYCLSDKPKLLPLELEKTACQEYSVTEFQPLYYVAESFSDAKEKVRTFAATIPRPFSVRYDPYTQRVEVLDNTQQLKILADSINSEVGILCNALQKIKS</sequence>
<evidence type="ECO:0000250" key="1">
    <source>
        <dbReference type="UniProtKB" id="P00439"/>
    </source>
</evidence>
<evidence type="ECO:0000250" key="2">
    <source>
        <dbReference type="UniProtKB" id="P16331"/>
    </source>
</evidence>
<evidence type="ECO:0000255" key="3">
    <source>
        <dbReference type="PROSITE-ProRule" id="PRU01007"/>
    </source>
</evidence>
<evidence type="ECO:0000269" key="4">
    <source>
    </source>
</evidence>
<evidence type="ECO:0000269" key="5">
    <source>
    </source>
</evidence>
<evidence type="ECO:0000269" key="6">
    <source>
    </source>
</evidence>
<evidence type="ECO:0000305" key="7"/>
<evidence type="ECO:0007744" key="8">
    <source>
        <dbReference type="PDB" id="1PHZ"/>
    </source>
</evidence>
<evidence type="ECO:0007744" key="9">
    <source>
        <dbReference type="PDB" id="2PHM"/>
    </source>
</evidence>
<evidence type="ECO:0007744" key="10">
    <source>
    </source>
</evidence>
<evidence type="ECO:0007829" key="11">
    <source>
        <dbReference type="PDB" id="1PHZ"/>
    </source>
</evidence>
<evidence type="ECO:0007829" key="12">
    <source>
        <dbReference type="PDB" id="5EGQ"/>
    </source>
</evidence>
<proteinExistence type="evidence at protein level"/>
<reference key="1">
    <citation type="journal article" date="1986" name="J. Biol. Chem.">
        <title>Isolation and sequence of a cDNA clone which contains the complete coding region of rat phenylalanine hydroxylase. Structural homology with tyrosine hydroxylase, glucocorticoid regulation, and use of alternate polyadenylation sites.</title>
        <authorList>
            <person name="Dahl H.-H.M."/>
            <person name="Mercer J.F.B."/>
        </authorList>
    </citation>
    <scope>NUCLEOTIDE SEQUENCE [MRNA]</scope>
</reference>
<reference key="2">
    <citation type="journal article" date="1980" name="Biochem. Biophys. Res. Commun.">
        <title>Amino acid sequence at the phosphorylated site of rat liver phenylalanine hydroxylase and phosphorylation of a corresponding synthetic peptide.</title>
        <authorList>
            <person name="Wretborn M."/>
            <person name="Humble E."/>
            <person name="Ragnarsson U."/>
            <person name="Engstrom L."/>
        </authorList>
    </citation>
    <scope>PROTEIN SEQUENCE OF 12-21</scope>
    <scope>PHOSPHORYLATION AT SER-16</scope>
    <source>
        <tissue>Liver</tissue>
    </source>
</reference>
<reference key="3">
    <citation type="journal article" date="1984" name="Biochemistry">
        <title>Sequence comparison of rat liver phenylalanine hydroxylase and its cDNA clones.</title>
        <authorList>
            <person name="Robson K.J.H."/>
            <person name="Beattie W."/>
            <person name="James R.J."/>
            <person name="Cotton R.C.H."/>
            <person name="Morgan F.J."/>
            <person name="Woo S.L.C."/>
        </authorList>
    </citation>
    <scope>NUCLEOTIDE SEQUENCE [MRNA] OF 208-453</scope>
</reference>
<reference key="4">
    <citation type="journal article" date="1980" name="Biochim. Biophys. Acta">
        <title>Purification and characterization of phenylalanine 4-monooxygenase from rat liver.</title>
        <authorList>
            <person name="Nakata H."/>
            <person name="Fujisawa H."/>
        </authorList>
    </citation>
    <scope>SUBUNIT</scope>
</reference>
<reference key="5">
    <citation type="journal article" date="2012" name="Nat. Commun.">
        <title>Quantitative maps of protein phosphorylation sites across 14 different rat organs and tissues.</title>
        <authorList>
            <person name="Lundby A."/>
            <person name="Secher A."/>
            <person name="Lage K."/>
            <person name="Nordsborg N.B."/>
            <person name="Dmytriyev A."/>
            <person name="Lundby C."/>
            <person name="Olsen J.V."/>
        </authorList>
    </citation>
    <scope>PHOSPHORYLATION [LARGE SCALE ANALYSIS] AT SER-16</scope>
    <scope>IDENTIFICATION BY MASS SPECTROMETRY [LARGE SCALE ANALYSIS]</scope>
</reference>
<reference evidence="8 9" key="6">
    <citation type="journal article" date="1999" name="Nat. Struct. Biol.">
        <title>Structural basis of autoregulation of phenylalanine hydroxylase.</title>
        <authorList>
            <person name="Kobe B."/>
            <person name="Jennings I.G."/>
            <person name="House C.M."/>
            <person name="Michell B.J."/>
            <person name="Goodwill K.E."/>
            <person name="Santarsiero B.D."/>
            <person name="Stevens R.C."/>
            <person name="Cotton R.G."/>
            <person name="Kemp B.E."/>
        </authorList>
    </citation>
    <scope>X-RAY CRYSTALLOGRAPHY (2.20 ANGSTROMS) OF 1-429 IN COMPLEX WITH IRON</scope>
    <scope>COFACTOR</scope>
</reference>
<feature type="initiator methionine" description="Removed" evidence="2">
    <location>
        <position position="1"/>
    </location>
</feature>
<feature type="chain" id="PRO_0000205550" description="Phenylalanine-4-hydroxylase">
    <location>
        <begin position="2"/>
        <end position="453"/>
    </location>
</feature>
<feature type="domain" description="ACT" evidence="3">
    <location>
        <begin position="36"/>
        <end position="114"/>
    </location>
</feature>
<feature type="binding site" evidence="4 8 9">
    <location>
        <position position="285"/>
    </location>
    <ligand>
        <name>Fe cation</name>
        <dbReference type="ChEBI" id="CHEBI:24875"/>
    </ligand>
</feature>
<feature type="binding site" evidence="4 8 9">
    <location>
        <position position="290"/>
    </location>
    <ligand>
        <name>Fe cation</name>
        <dbReference type="ChEBI" id="CHEBI:24875"/>
    </ligand>
</feature>
<feature type="binding site" evidence="4 8 9">
    <location>
        <position position="330"/>
    </location>
    <ligand>
        <name>Fe cation</name>
        <dbReference type="ChEBI" id="CHEBI:24875"/>
    </ligand>
</feature>
<feature type="modified residue" description="N-acetylalanine" evidence="2">
    <location>
        <position position="2"/>
    </location>
</feature>
<feature type="modified residue" description="Phosphoserine; by PKA" evidence="5 10">
    <location>
        <position position="16"/>
    </location>
</feature>
<feature type="strand" evidence="11">
    <location>
        <begin position="35"/>
        <end position="42"/>
    </location>
</feature>
<feature type="helix" evidence="11">
    <location>
        <begin position="47"/>
        <end position="56"/>
    </location>
</feature>
<feature type="turn" evidence="11">
    <location>
        <begin position="57"/>
        <end position="59"/>
    </location>
</feature>
<feature type="strand" evidence="11">
    <location>
        <begin position="64"/>
        <end position="69"/>
    </location>
</feature>
<feature type="strand" evidence="11">
    <location>
        <begin position="76"/>
        <end position="81"/>
    </location>
</feature>
<feature type="helix" evidence="11">
    <location>
        <begin position="85"/>
        <end position="87"/>
    </location>
</feature>
<feature type="helix" evidence="11">
    <location>
        <begin position="88"/>
        <end position="100"/>
    </location>
</feature>
<feature type="strand" evidence="11">
    <location>
        <begin position="106"/>
        <end position="110"/>
    </location>
</feature>
<feature type="strand" evidence="12">
    <location>
        <begin position="117"/>
        <end position="119"/>
    </location>
</feature>
<feature type="helix" evidence="11">
    <location>
        <begin position="125"/>
        <end position="129"/>
    </location>
</feature>
<feature type="turn" evidence="11">
    <location>
        <begin position="130"/>
        <end position="133"/>
    </location>
</feature>
<feature type="turn" evidence="11">
    <location>
        <begin position="147"/>
        <end position="150"/>
    </location>
</feature>
<feature type="helix" evidence="11">
    <location>
        <begin position="152"/>
        <end position="166"/>
    </location>
</feature>
<feature type="helix" evidence="11">
    <location>
        <begin position="181"/>
        <end position="201"/>
    </location>
</feature>
<feature type="helix" evidence="11">
    <location>
        <begin position="204"/>
        <end position="216"/>
    </location>
</feature>
<feature type="helix" evidence="11">
    <location>
        <begin position="227"/>
        <end position="238"/>
    </location>
</feature>
<feature type="strand" evidence="11">
    <location>
        <begin position="241"/>
        <end position="244"/>
    </location>
</feature>
<feature type="helix" evidence="11">
    <location>
        <begin position="251"/>
        <end position="258"/>
    </location>
</feature>
<feature type="turn" evidence="11">
    <location>
        <begin position="259"/>
        <end position="261"/>
    </location>
</feature>
<feature type="strand" evidence="11">
    <location>
        <begin position="262"/>
        <end position="265"/>
    </location>
</feature>
<feature type="helix" evidence="11">
    <location>
        <begin position="283"/>
        <end position="289"/>
    </location>
</feature>
<feature type="helix" evidence="11">
    <location>
        <begin position="291"/>
        <end position="294"/>
    </location>
</feature>
<feature type="helix" evidence="11">
    <location>
        <begin position="297"/>
        <end position="310"/>
    </location>
</feature>
<feature type="helix" evidence="11">
    <location>
        <begin position="315"/>
        <end position="326"/>
    </location>
</feature>
<feature type="turn" evidence="11">
    <location>
        <begin position="327"/>
        <end position="331"/>
    </location>
</feature>
<feature type="strand" evidence="11">
    <location>
        <begin position="333"/>
        <end position="336"/>
    </location>
</feature>
<feature type="strand" evidence="11">
    <location>
        <begin position="339"/>
        <end position="342"/>
    </location>
</feature>
<feature type="helix" evidence="11">
    <location>
        <begin position="345"/>
        <end position="348"/>
    </location>
</feature>
<feature type="helix" evidence="11">
    <location>
        <begin position="351"/>
        <end position="357"/>
    </location>
</feature>
<feature type="strand" evidence="11">
    <location>
        <begin position="359"/>
        <end position="366"/>
    </location>
</feature>
<feature type="helix" evidence="11">
    <location>
        <begin position="369"/>
        <end position="372"/>
    </location>
</feature>
<feature type="strand" evidence="11">
    <location>
        <begin position="379"/>
        <end position="382"/>
    </location>
</feature>
<feature type="strand" evidence="11">
    <location>
        <begin position="384"/>
        <end position="390"/>
    </location>
</feature>
<feature type="helix" evidence="11">
    <location>
        <begin position="392"/>
        <end position="403"/>
    </location>
</feature>
<feature type="strand" evidence="11">
    <location>
        <begin position="409"/>
        <end position="415"/>
    </location>
</feature>
<feature type="turn" evidence="11">
    <location>
        <begin position="416"/>
        <end position="419"/>
    </location>
</feature>
<feature type="strand" evidence="11">
    <location>
        <begin position="420"/>
        <end position="424"/>
    </location>
</feature>
<feature type="helix" evidence="12">
    <location>
        <begin position="426"/>
        <end position="448"/>
    </location>
</feature>
<gene>
    <name type="primary">Pah</name>
</gene>
<accession>P04176</accession>
<organism>
    <name type="scientific">Rattus norvegicus</name>
    <name type="common">Rat</name>
    <dbReference type="NCBI Taxonomy" id="10116"/>
    <lineage>
        <taxon>Eukaryota</taxon>
        <taxon>Metazoa</taxon>
        <taxon>Chordata</taxon>
        <taxon>Craniata</taxon>
        <taxon>Vertebrata</taxon>
        <taxon>Euteleostomi</taxon>
        <taxon>Mammalia</taxon>
        <taxon>Eutheria</taxon>
        <taxon>Euarchontoglires</taxon>
        <taxon>Glires</taxon>
        <taxon>Rodentia</taxon>
        <taxon>Myomorpha</taxon>
        <taxon>Muroidea</taxon>
        <taxon>Muridae</taxon>
        <taxon>Murinae</taxon>
        <taxon>Rattus</taxon>
    </lineage>
</organism>
<protein>
    <recommendedName>
        <fullName>Phenylalanine-4-hydroxylase</fullName>
        <shortName>PAH</shortName>
        <ecNumber evidence="1">1.14.16.1</ecNumber>
    </recommendedName>
    <alternativeName>
        <fullName>Phe-4-monooxygenase</fullName>
    </alternativeName>
</protein>
<dbReference type="EC" id="1.14.16.1" evidence="1"/>
<dbReference type="EMBL" id="M12337">
    <property type="protein sequence ID" value="AAA41843.1"/>
    <property type="molecule type" value="mRNA"/>
</dbReference>
<dbReference type="EMBL" id="K02599">
    <property type="protein sequence ID" value="AAA41794.1"/>
    <property type="molecule type" value="mRNA"/>
</dbReference>
<dbReference type="PIR" id="A25321">
    <property type="entry name" value="WHRTF"/>
</dbReference>
<dbReference type="PDB" id="1PHZ">
    <property type="method" value="X-ray"/>
    <property type="resolution" value="2.20 A"/>
    <property type="chains" value="A=1-429"/>
</dbReference>
<dbReference type="PDB" id="2PHM">
    <property type="method" value="X-ray"/>
    <property type="resolution" value="2.60 A"/>
    <property type="chains" value="A=1-429"/>
</dbReference>
<dbReference type="PDB" id="5DEN">
    <property type="method" value="X-ray"/>
    <property type="resolution" value="2.90 A"/>
    <property type="chains" value="A/B/C/D=1-453"/>
</dbReference>
<dbReference type="PDB" id="5EGQ">
    <property type="method" value="X-ray"/>
    <property type="resolution" value="2.50 A"/>
    <property type="chains" value="A/B/C/D=1-453"/>
</dbReference>
<dbReference type="PDB" id="5FGJ">
    <property type="method" value="X-ray"/>
    <property type="resolution" value="3.60 A"/>
    <property type="chains" value="A/B/C/D=1-453"/>
</dbReference>
<dbReference type="PDBsum" id="1PHZ"/>
<dbReference type="PDBsum" id="2PHM"/>
<dbReference type="PDBsum" id="5DEN"/>
<dbReference type="PDBsum" id="5EGQ"/>
<dbReference type="PDBsum" id="5FGJ"/>
<dbReference type="SMR" id="P04176"/>
<dbReference type="FunCoup" id="P04176">
    <property type="interactions" value="181"/>
</dbReference>
<dbReference type="STRING" id="10116.ENSRNOP00000005844"/>
<dbReference type="BindingDB" id="P04176"/>
<dbReference type="ChEMBL" id="CHEMBL3077"/>
<dbReference type="iPTMnet" id="P04176"/>
<dbReference type="PhosphoSitePlus" id="P04176"/>
<dbReference type="PaxDb" id="10116-ENSRNOP00000005844"/>
<dbReference type="UCSC" id="RGD:3248">
    <property type="organism name" value="rat"/>
</dbReference>
<dbReference type="AGR" id="RGD:3248"/>
<dbReference type="RGD" id="3248">
    <property type="gene designation" value="Pah"/>
</dbReference>
<dbReference type="eggNOG" id="KOG3820">
    <property type="taxonomic scope" value="Eukaryota"/>
</dbReference>
<dbReference type="InParanoid" id="P04176"/>
<dbReference type="PhylomeDB" id="P04176"/>
<dbReference type="BRENDA" id="1.14.16.1">
    <property type="organism ID" value="5301"/>
</dbReference>
<dbReference type="Reactome" id="R-RNO-8964208">
    <property type="pathway name" value="Phenylalanine metabolism"/>
</dbReference>
<dbReference type="SABIO-RK" id="P04176"/>
<dbReference type="STRENDA-DB" id="4ICZMX">
    <property type="experiment" value="Tyrosine Formation Assay"/>
</dbReference>
<dbReference type="UniPathway" id="UPA00139">
    <property type="reaction ID" value="UER00337"/>
</dbReference>
<dbReference type="EvolutionaryTrace" id="P04176"/>
<dbReference type="PRO" id="PR:P04176"/>
<dbReference type="Proteomes" id="UP000002494">
    <property type="component" value="Unplaced"/>
</dbReference>
<dbReference type="GO" id="GO:0016597">
    <property type="term" value="F:amino acid binding"/>
    <property type="evidence" value="ECO:0000314"/>
    <property type="project" value="RGD"/>
</dbReference>
<dbReference type="GO" id="GO:0042802">
    <property type="term" value="F:identical protein binding"/>
    <property type="evidence" value="ECO:0000353"/>
    <property type="project" value="RGD"/>
</dbReference>
<dbReference type="GO" id="GO:0005506">
    <property type="term" value="F:iron ion binding"/>
    <property type="evidence" value="ECO:0000314"/>
    <property type="project" value="RGD"/>
</dbReference>
<dbReference type="GO" id="GO:0004505">
    <property type="term" value="F:phenylalanine 4-monooxygenase activity"/>
    <property type="evidence" value="ECO:0000314"/>
    <property type="project" value="RGD"/>
</dbReference>
<dbReference type="GO" id="GO:0006559">
    <property type="term" value="P:L-phenylalanine catabolic process"/>
    <property type="evidence" value="ECO:0007669"/>
    <property type="project" value="UniProtKB-UniPathway"/>
</dbReference>
<dbReference type="GO" id="GO:0006558">
    <property type="term" value="P:L-phenylalanine metabolic process"/>
    <property type="evidence" value="ECO:0000314"/>
    <property type="project" value="RGD"/>
</dbReference>
<dbReference type="GO" id="GO:0006571">
    <property type="term" value="P:tyrosine biosynthetic process"/>
    <property type="evidence" value="ECO:0000314"/>
    <property type="project" value="RGD"/>
</dbReference>
<dbReference type="GO" id="GO:0019293">
    <property type="term" value="P:tyrosine biosynthetic process, by oxidation of phenylalanine"/>
    <property type="evidence" value="ECO:0000314"/>
    <property type="project" value="RGD"/>
</dbReference>
<dbReference type="CDD" id="cd04931">
    <property type="entry name" value="ACT_PAH"/>
    <property type="match status" value="1"/>
</dbReference>
<dbReference type="CDD" id="cd03347">
    <property type="entry name" value="eu_PheOH"/>
    <property type="match status" value="1"/>
</dbReference>
<dbReference type="FunFam" id="1.10.800.10:FF:000003">
    <property type="entry name" value="Phenylalanine-4-hydroxylase"/>
    <property type="match status" value="1"/>
</dbReference>
<dbReference type="Gene3D" id="1.10.800.10">
    <property type="entry name" value="Aromatic amino acid hydroxylase"/>
    <property type="match status" value="1"/>
</dbReference>
<dbReference type="InterPro" id="IPR045865">
    <property type="entry name" value="ACT-like_dom_sf"/>
</dbReference>
<dbReference type="InterPro" id="IPR002912">
    <property type="entry name" value="ACT_dom"/>
</dbReference>
<dbReference type="InterPro" id="IPR001273">
    <property type="entry name" value="ArAA_hydroxylase"/>
</dbReference>
<dbReference type="InterPro" id="IPR018301">
    <property type="entry name" value="ArAA_hydroxylase_Fe/CU_BS"/>
</dbReference>
<dbReference type="InterPro" id="IPR036951">
    <property type="entry name" value="ArAA_hydroxylase_sf"/>
</dbReference>
<dbReference type="InterPro" id="IPR036329">
    <property type="entry name" value="Aro-AA_hydroxylase_C_sf"/>
</dbReference>
<dbReference type="InterPro" id="IPR019774">
    <property type="entry name" value="Aromatic-AA_hydroxylase_C"/>
</dbReference>
<dbReference type="InterPro" id="IPR041912">
    <property type="entry name" value="Euk_PheOH_cat"/>
</dbReference>
<dbReference type="InterPro" id="IPR005961">
    <property type="entry name" value="Phe-4-hydroxylase_tetra"/>
</dbReference>
<dbReference type="InterPro" id="IPR019773">
    <property type="entry name" value="Tyrosine_3-monooxygenase-like"/>
</dbReference>
<dbReference type="NCBIfam" id="TIGR01268">
    <property type="entry name" value="Phe4hydrox_tetr"/>
    <property type="match status" value="1"/>
</dbReference>
<dbReference type="PANTHER" id="PTHR11473">
    <property type="entry name" value="AROMATIC AMINO ACID HYDROXYLASE"/>
    <property type="match status" value="1"/>
</dbReference>
<dbReference type="PANTHER" id="PTHR11473:SF24">
    <property type="entry name" value="PHENYLALANINE-4-HYDROXYLASE"/>
    <property type="match status" value="1"/>
</dbReference>
<dbReference type="Pfam" id="PF01842">
    <property type="entry name" value="ACT"/>
    <property type="match status" value="1"/>
</dbReference>
<dbReference type="Pfam" id="PF00351">
    <property type="entry name" value="Biopterin_H"/>
    <property type="match status" value="1"/>
</dbReference>
<dbReference type="PIRSF" id="PIRSF000336">
    <property type="entry name" value="TH"/>
    <property type="match status" value="1"/>
</dbReference>
<dbReference type="PRINTS" id="PR00372">
    <property type="entry name" value="FYWHYDRXLASE"/>
</dbReference>
<dbReference type="SUPFAM" id="SSF55021">
    <property type="entry name" value="ACT-like"/>
    <property type="match status" value="1"/>
</dbReference>
<dbReference type="SUPFAM" id="SSF56534">
    <property type="entry name" value="Aromatic aminoacid monoxygenases, catalytic and oligomerization domains"/>
    <property type="match status" value="1"/>
</dbReference>
<dbReference type="PROSITE" id="PS51671">
    <property type="entry name" value="ACT"/>
    <property type="match status" value="1"/>
</dbReference>
<dbReference type="PROSITE" id="PS00367">
    <property type="entry name" value="BH4_AAA_HYDROXYL_1"/>
    <property type="match status" value="1"/>
</dbReference>
<dbReference type="PROSITE" id="PS51410">
    <property type="entry name" value="BH4_AAA_HYDROXYL_2"/>
    <property type="match status" value="1"/>
</dbReference>